<reference key="1">
    <citation type="journal article" date="2006" name="BMC Genomics">
        <title>Complete genome sequence of Shigella flexneri 5b and comparison with Shigella flexneri 2a.</title>
        <authorList>
            <person name="Nie H."/>
            <person name="Yang F."/>
            <person name="Zhang X."/>
            <person name="Yang J."/>
            <person name="Chen L."/>
            <person name="Wang J."/>
            <person name="Xiong Z."/>
            <person name="Peng J."/>
            <person name="Sun L."/>
            <person name="Dong J."/>
            <person name="Xue Y."/>
            <person name="Xu X."/>
            <person name="Chen S."/>
            <person name="Yao Z."/>
            <person name="Shen Y."/>
            <person name="Jin Q."/>
        </authorList>
    </citation>
    <scope>NUCLEOTIDE SEQUENCE [LARGE SCALE GENOMIC DNA]</scope>
    <source>
        <strain>8401</strain>
    </source>
</reference>
<sequence>MAMKKLLIASLLFSSATVYGAEGFVVKDIHFEGLQRVAVGAALLSMPVRTGDTVNDEDISNTIRALFATGNFEDVRVLRDGDTLLVQVKERPTIASITFSGNKSVKDDMLKQNLEASGVRVGESLDRTTIADIEKGLEDFYYSVGKYSASVKAVVTPLPRNRVDLKLVFQEGVSAEIQQINIVGNHAFTTDELISHFQLRDEVPWWNVVGDRKYQKQKLAGDLETLRSYYLDRGYARFNIDSTQVSLTPDKKGIYVTVNITEGDQYKLSGVEVSGNLAGHSAEIEQLTKIEPGELYNGTKVTKMEDDIKKLLGRYGYAYPRVQSMPEINDADKTVKLRVNVDAGNRFYVRKIRFEGNDTSKDAVLRREMRQMEGAWLGSDLVDQGKERLNRLGFFETVDTDTQRVPGSPDQVDVVYKVKERNTGSFNFGIGYGTESGVSFQAGVQQDNWLGTGYAVGINGTKNDYQTYAELSVTNPYFTVDGVSLGGRLFYNDFQADDADLSDYTNKSYGTDVTLGFPINEYNSLRAGLGYVHNSLSNMQPQVAMWRYLYSMGEHPSTSDQDNSFKTDDFTFNYGWTYNKLDRGYFPTDGSRVNLTGKVTIPGSDNEYYKVTLDTATYVPIDDDHKWVVLGRTRWGYGDGLGGKEMPFYENFYAGGSSTVRGFQSNTIGPKAVYFPHQASNYDPDYDYECATQDGAKDLCKSDDAVGGNAMAVASLEFITPTPFISDKYANSVRTSFFWDMGTVWDTNWDSSQYSGYPDYSDPSNIRMSAGIALQWMSPLGPLVFSYAQPFKKYDGDKAEQFQFNIGKTW</sequence>
<proteinExistence type="inferred from homology"/>
<feature type="signal peptide" evidence="1">
    <location>
        <begin position="1"/>
        <end position="20"/>
    </location>
</feature>
<feature type="chain" id="PRO_1000024391" description="Outer membrane protein assembly factor BamA">
    <location>
        <begin position="21"/>
        <end position="810"/>
    </location>
</feature>
<feature type="domain" description="POTRA 1" evidence="2">
    <location>
        <begin position="24"/>
        <end position="91"/>
    </location>
</feature>
<feature type="domain" description="POTRA 2" evidence="2">
    <location>
        <begin position="92"/>
        <end position="172"/>
    </location>
</feature>
<feature type="domain" description="POTRA 3" evidence="2">
    <location>
        <begin position="175"/>
        <end position="263"/>
    </location>
</feature>
<feature type="domain" description="POTRA 4" evidence="2">
    <location>
        <begin position="266"/>
        <end position="344"/>
    </location>
</feature>
<feature type="domain" description="POTRA 5" evidence="2">
    <location>
        <begin position="347"/>
        <end position="421"/>
    </location>
</feature>
<accession>Q0T832</accession>
<name>BAMA_SHIF8</name>
<evidence type="ECO:0000255" key="1">
    <source>
        <dbReference type="HAMAP-Rule" id="MF_01430"/>
    </source>
</evidence>
<evidence type="ECO:0000255" key="2">
    <source>
        <dbReference type="PROSITE-ProRule" id="PRU01115"/>
    </source>
</evidence>
<keyword id="KW-0998">Cell outer membrane</keyword>
<keyword id="KW-0472">Membrane</keyword>
<keyword id="KW-0677">Repeat</keyword>
<keyword id="KW-0732">Signal</keyword>
<keyword id="KW-0812">Transmembrane</keyword>
<keyword id="KW-1134">Transmembrane beta strand</keyword>
<dbReference type="EMBL" id="CP000266">
    <property type="protein sequence ID" value="ABF02444.1"/>
    <property type="molecule type" value="Genomic_DNA"/>
</dbReference>
<dbReference type="RefSeq" id="WP_001240896.1">
    <property type="nucleotide sequence ID" value="NC_008258.1"/>
</dbReference>
<dbReference type="SMR" id="Q0T832"/>
<dbReference type="GeneID" id="93777248"/>
<dbReference type="KEGG" id="sfv:SFV_0160"/>
<dbReference type="HOGENOM" id="CLU_007664_1_0_6"/>
<dbReference type="Proteomes" id="UP000000659">
    <property type="component" value="Chromosome"/>
</dbReference>
<dbReference type="GO" id="GO:1990063">
    <property type="term" value="C:Bam protein complex"/>
    <property type="evidence" value="ECO:0007669"/>
    <property type="project" value="TreeGrafter"/>
</dbReference>
<dbReference type="GO" id="GO:0043165">
    <property type="term" value="P:Gram-negative-bacterium-type cell outer membrane assembly"/>
    <property type="evidence" value="ECO:0007669"/>
    <property type="project" value="UniProtKB-UniRule"/>
</dbReference>
<dbReference type="GO" id="GO:0051205">
    <property type="term" value="P:protein insertion into membrane"/>
    <property type="evidence" value="ECO:0007669"/>
    <property type="project" value="UniProtKB-UniRule"/>
</dbReference>
<dbReference type="FunFam" id="2.40.160.50:FF:000001">
    <property type="entry name" value="Outer membrane protein assembly factor BamA"/>
    <property type="match status" value="1"/>
</dbReference>
<dbReference type="FunFam" id="3.10.20.310:FF:000001">
    <property type="entry name" value="Outer membrane protein assembly factor BamA"/>
    <property type="match status" value="1"/>
</dbReference>
<dbReference type="FunFam" id="3.10.20.310:FF:000002">
    <property type="entry name" value="Outer membrane protein assembly factor BamA"/>
    <property type="match status" value="1"/>
</dbReference>
<dbReference type="FunFam" id="3.10.20.310:FF:000003">
    <property type="entry name" value="Outer membrane protein assembly factor BamA"/>
    <property type="match status" value="1"/>
</dbReference>
<dbReference type="FunFam" id="3.10.20.310:FF:000004">
    <property type="entry name" value="Outer membrane protein assembly factor BamA"/>
    <property type="match status" value="1"/>
</dbReference>
<dbReference type="FunFam" id="3.10.20.310:FF:000005">
    <property type="entry name" value="Outer membrane protein assembly factor BamA"/>
    <property type="match status" value="1"/>
</dbReference>
<dbReference type="Gene3D" id="3.10.20.310">
    <property type="entry name" value="membrane protein fhac"/>
    <property type="match status" value="5"/>
</dbReference>
<dbReference type="Gene3D" id="2.40.160.50">
    <property type="entry name" value="membrane protein fhac: a member of the omp85/tpsb transporter family"/>
    <property type="match status" value="1"/>
</dbReference>
<dbReference type="HAMAP" id="MF_01430">
    <property type="entry name" value="OM_assembly_BamA"/>
    <property type="match status" value="1"/>
</dbReference>
<dbReference type="InterPro" id="IPR000184">
    <property type="entry name" value="Bac_surfAg_D15"/>
</dbReference>
<dbReference type="InterPro" id="IPR010827">
    <property type="entry name" value="BamA/TamA_POTRA"/>
</dbReference>
<dbReference type="InterPro" id="IPR039910">
    <property type="entry name" value="D15-like"/>
</dbReference>
<dbReference type="InterPro" id="IPR023707">
    <property type="entry name" value="OM_assembly_BamA"/>
</dbReference>
<dbReference type="InterPro" id="IPR034746">
    <property type="entry name" value="POTRA"/>
</dbReference>
<dbReference type="NCBIfam" id="TIGR03303">
    <property type="entry name" value="OM_YaeT"/>
    <property type="match status" value="1"/>
</dbReference>
<dbReference type="NCBIfam" id="NF008287">
    <property type="entry name" value="PRK11067.1"/>
    <property type="match status" value="1"/>
</dbReference>
<dbReference type="PANTHER" id="PTHR12815:SF23">
    <property type="entry name" value="OUTER MEMBRANE PROTEIN ASSEMBLY FACTOR BAMA"/>
    <property type="match status" value="1"/>
</dbReference>
<dbReference type="PANTHER" id="PTHR12815">
    <property type="entry name" value="SORTING AND ASSEMBLY MACHINERY SAMM50 PROTEIN FAMILY MEMBER"/>
    <property type="match status" value="1"/>
</dbReference>
<dbReference type="Pfam" id="PF01103">
    <property type="entry name" value="Omp85"/>
    <property type="match status" value="1"/>
</dbReference>
<dbReference type="Pfam" id="PF07244">
    <property type="entry name" value="POTRA"/>
    <property type="match status" value="4"/>
</dbReference>
<dbReference type="PIRSF" id="PIRSF006076">
    <property type="entry name" value="OM_assembly_OMP85"/>
    <property type="match status" value="1"/>
</dbReference>
<dbReference type="PROSITE" id="PS51779">
    <property type="entry name" value="POTRA"/>
    <property type="match status" value="5"/>
</dbReference>
<comment type="function">
    <text evidence="1">Part of the outer membrane protein assembly complex, which is involved in assembly and insertion of beta-barrel proteins into the outer membrane. Constitutes, with BamD, the core component of the assembly machinery.</text>
</comment>
<comment type="subunit">
    <text evidence="1">Part of the Bam complex, which is composed of the outer membrane protein BamA, and four lipoproteins BamB, BamC, BamD and BamE.</text>
</comment>
<comment type="subcellular location">
    <subcellularLocation>
        <location evidence="1">Cell outer membrane</location>
    </subcellularLocation>
</comment>
<comment type="similarity">
    <text evidence="1">Belongs to the BamA family.</text>
</comment>
<organism>
    <name type="scientific">Shigella flexneri serotype 5b (strain 8401)</name>
    <dbReference type="NCBI Taxonomy" id="373384"/>
    <lineage>
        <taxon>Bacteria</taxon>
        <taxon>Pseudomonadati</taxon>
        <taxon>Pseudomonadota</taxon>
        <taxon>Gammaproteobacteria</taxon>
        <taxon>Enterobacterales</taxon>
        <taxon>Enterobacteriaceae</taxon>
        <taxon>Shigella</taxon>
    </lineage>
</organism>
<protein>
    <recommendedName>
        <fullName evidence="1">Outer membrane protein assembly factor BamA</fullName>
    </recommendedName>
</protein>
<gene>
    <name evidence="1" type="primary">bamA</name>
    <name type="synonym">yaeT</name>
    <name type="ordered locus">SFV_0160</name>
</gene>